<accession>Q8FH96</accession>
<proteinExistence type="inferred from homology"/>
<organism>
    <name type="scientific">Escherichia coli O6:H1 (strain CFT073 / ATCC 700928 / UPEC)</name>
    <dbReference type="NCBI Taxonomy" id="199310"/>
    <lineage>
        <taxon>Bacteria</taxon>
        <taxon>Pseudomonadati</taxon>
        <taxon>Pseudomonadota</taxon>
        <taxon>Gammaproteobacteria</taxon>
        <taxon>Enterobacterales</taxon>
        <taxon>Enterobacteriaceae</taxon>
        <taxon>Escherichia</taxon>
    </lineage>
</organism>
<gene>
    <name evidence="1" type="primary">rsxB</name>
    <name type="ordered locus">c2020</name>
</gene>
<name>RSXB_ECOL6</name>
<reference key="1">
    <citation type="journal article" date="2002" name="Proc. Natl. Acad. Sci. U.S.A.">
        <title>Extensive mosaic structure revealed by the complete genome sequence of uropathogenic Escherichia coli.</title>
        <authorList>
            <person name="Welch R.A."/>
            <person name="Burland V."/>
            <person name="Plunkett G. III"/>
            <person name="Redford P."/>
            <person name="Roesch P."/>
            <person name="Rasko D."/>
            <person name="Buckles E.L."/>
            <person name="Liou S.-R."/>
            <person name="Boutin A."/>
            <person name="Hackett J."/>
            <person name="Stroud D."/>
            <person name="Mayhew G.F."/>
            <person name="Rose D.J."/>
            <person name="Zhou S."/>
            <person name="Schwartz D.C."/>
            <person name="Perna N.T."/>
            <person name="Mobley H.L.T."/>
            <person name="Donnenberg M.S."/>
            <person name="Blattner F.R."/>
        </authorList>
    </citation>
    <scope>NUCLEOTIDE SEQUENCE [LARGE SCALE GENOMIC DNA]</scope>
    <source>
        <strain>CFT073 / ATCC 700928 / UPEC</strain>
    </source>
</reference>
<dbReference type="EC" id="7.-.-.-" evidence="1"/>
<dbReference type="EMBL" id="AE014075">
    <property type="protein sequence ID" value="AAN80480.1"/>
    <property type="molecule type" value="Genomic_DNA"/>
</dbReference>
<dbReference type="RefSeq" id="WP_000991093.1">
    <property type="nucleotide sequence ID" value="NZ_CP051263.1"/>
</dbReference>
<dbReference type="STRING" id="199310.c2020"/>
<dbReference type="KEGG" id="ecc:c2020"/>
<dbReference type="eggNOG" id="COG2878">
    <property type="taxonomic scope" value="Bacteria"/>
</dbReference>
<dbReference type="HOGENOM" id="CLU_063448_2_0_6"/>
<dbReference type="BioCyc" id="ECOL199310:C2020-MONOMER"/>
<dbReference type="Proteomes" id="UP000001410">
    <property type="component" value="Chromosome"/>
</dbReference>
<dbReference type="GO" id="GO:0005886">
    <property type="term" value="C:plasma membrane"/>
    <property type="evidence" value="ECO:0007669"/>
    <property type="project" value="UniProtKB-SubCell"/>
</dbReference>
<dbReference type="GO" id="GO:0051539">
    <property type="term" value="F:4 iron, 4 sulfur cluster binding"/>
    <property type="evidence" value="ECO:0007669"/>
    <property type="project" value="UniProtKB-UniRule"/>
</dbReference>
<dbReference type="GO" id="GO:0009055">
    <property type="term" value="F:electron transfer activity"/>
    <property type="evidence" value="ECO:0007669"/>
    <property type="project" value="InterPro"/>
</dbReference>
<dbReference type="GO" id="GO:0046872">
    <property type="term" value="F:metal ion binding"/>
    <property type="evidence" value="ECO:0007669"/>
    <property type="project" value="UniProtKB-KW"/>
</dbReference>
<dbReference type="GO" id="GO:0022900">
    <property type="term" value="P:electron transport chain"/>
    <property type="evidence" value="ECO:0007669"/>
    <property type="project" value="UniProtKB-UniRule"/>
</dbReference>
<dbReference type="FunFam" id="1.10.15.40:FF:000001">
    <property type="entry name" value="Ion-translocating oxidoreductase complex subunit B"/>
    <property type="match status" value="1"/>
</dbReference>
<dbReference type="Gene3D" id="3.30.70.20">
    <property type="match status" value="1"/>
</dbReference>
<dbReference type="Gene3D" id="1.10.15.40">
    <property type="entry name" value="Electron transport complex subunit B, putative Fe-S cluster"/>
    <property type="match status" value="1"/>
</dbReference>
<dbReference type="HAMAP" id="MF_00463">
    <property type="entry name" value="RsxB_RnfB"/>
    <property type="match status" value="1"/>
</dbReference>
<dbReference type="InterPro" id="IPR007202">
    <property type="entry name" value="4Fe-4S_dom"/>
</dbReference>
<dbReference type="InterPro" id="IPR017896">
    <property type="entry name" value="4Fe4S_Fe-S-bd"/>
</dbReference>
<dbReference type="InterPro" id="IPR017900">
    <property type="entry name" value="4Fe4S_Fe_S_CS"/>
</dbReference>
<dbReference type="InterPro" id="IPR050395">
    <property type="entry name" value="4Fe4S_Ferredoxin_RnfB"/>
</dbReference>
<dbReference type="InterPro" id="IPR010207">
    <property type="entry name" value="Elect_transpt_cplx_RnfB/RsxB"/>
</dbReference>
<dbReference type="InterPro" id="IPR016463">
    <property type="entry name" value="RnfB/RsxB_Proteobac"/>
</dbReference>
<dbReference type="NCBIfam" id="NF003475">
    <property type="entry name" value="PRK05113.1"/>
    <property type="match status" value="1"/>
</dbReference>
<dbReference type="NCBIfam" id="TIGR01944">
    <property type="entry name" value="rnfB"/>
    <property type="match status" value="1"/>
</dbReference>
<dbReference type="PANTHER" id="PTHR43560">
    <property type="entry name" value="ION-TRANSLOCATING OXIDOREDUCTASE COMPLEX SUBUNIT B"/>
    <property type="match status" value="1"/>
</dbReference>
<dbReference type="PANTHER" id="PTHR43560:SF1">
    <property type="entry name" value="ION-TRANSLOCATING OXIDOREDUCTASE COMPLEX SUBUNIT B"/>
    <property type="match status" value="1"/>
</dbReference>
<dbReference type="Pfam" id="PF14697">
    <property type="entry name" value="Fer4_21"/>
    <property type="match status" value="1"/>
</dbReference>
<dbReference type="Pfam" id="PF04060">
    <property type="entry name" value="FeS"/>
    <property type="match status" value="1"/>
</dbReference>
<dbReference type="PIRSF" id="PIRSF005784">
    <property type="entry name" value="Elect_transpt_RnfB"/>
    <property type="match status" value="1"/>
</dbReference>
<dbReference type="SUPFAM" id="SSF54862">
    <property type="entry name" value="4Fe-4S ferredoxins"/>
    <property type="match status" value="1"/>
</dbReference>
<dbReference type="PROSITE" id="PS51656">
    <property type="entry name" value="4FE4S"/>
    <property type="match status" value="1"/>
</dbReference>
<dbReference type="PROSITE" id="PS00198">
    <property type="entry name" value="4FE4S_FER_1"/>
    <property type="match status" value="2"/>
</dbReference>
<dbReference type="PROSITE" id="PS51379">
    <property type="entry name" value="4FE4S_FER_2"/>
    <property type="match status" value="2"/>
</dbReference>
<feature type="chain" id="PRO_1000013642" description="Ion-translocating oxidoreductase complex subunit B">
    <location>
        <begin position="1"/>
        <end position="192"/>
    </location>
</feature>
<feature type="domain" description="4Fe-4S" evidence="1">
    <location>
        <begin position="32"/>
        <end position="91"/>
    </location>
</feature>
<feature type="domain" description="4Fe-4S ferredoxin-type 1" evidence="1">
    <location>
        <begin position="108"/>
        <end position="137"/>
    </location>
</feature>
<feature type="domain" description="4Fe-4S ferredoxin-type 2" evidence="1">
    <location>
        <begin position="138"/>
        <end position="167"/>
    </location>
</feature>
<feature type="region of interest" description="Hydrophobic" evidence="1">
    <location>
        <begin position="1"/>
        <end position="26"/>
    </location>
</feature>
<feature type="binding site" evidence="1">
    <location>
        <position position="49"/>
    </location>
    <ligand>
        <name>[4Fe-4S] cluster</name>
        <dbReference type="ChEBI" id="CHEBI:49883"/>
        <label>1</label>
    </ligand>
</feature>
<feature type="binding site" evidence="1">
    <location>
        <position position="52"/>
    </location>
    <ligand>
        <name>[4Fe-4S] cluster</name>
        <dbReference type="ChEBI" id="CHEBI:49883"/>
        <label>1</label>
    </ligand>
</feature>
<feature type="binding site" evidence="1">
    <location>
        <position position="57"/>
    </location>
    <ligand>
        <name>[4Fe-4S] cluster</name>
        <dbReference type="ChEBI" id="CHEBI:49883"/>
        <label>1</label>
    </ligand>
</feature>
<feature type="binding site" evidence="1">
    <location>
        <position position="74"/>
    </location>
    <ligand>
        <name>[4Fe-4S] cluster</name>
        <dbReference type="ChEBI" id="CHEBI:49883"/>
        <label>1</label>
    </ligand>
</feature>
<feature type="binding site" evidence="1">
    <location>
        <position position="117"/>
    </location>
    <ligand>
        <name>[4Fe-4S] cluster</name>
        <dbReference type="ChEBI" id="CHEBI:49883"/>
        <label>2</label>
    </ligand>
</feature>
<feature type="binding site" evidence="1">
    <location>
        <position position="120"/>
    </location>
    <ligand>
        <name>[4Fe-4S] cluster</name>
        <dbReference type="ChEBI" id="CHEBI:49883"/>
        <label>2</label>
    </ligand>
</feature>
<feature type="binding site" evidence="1">
    <location>
        <position position="123"/>
    </location>
    <ligand>
        <name>[4Fe-4S] cluster</name>
        <dbReference type="ChEBI" id="CHEBI:49883"/>
        <label>2</label>
    </ligand>
</feature>
<feature type="binding site" evidence="1">
    <location>
        <position position="127"/>
    </location>
    <ligand>
        <name>[4Fe-4S] cluster</name>
        <dbReference type="ChEBI" id="CHEBI:49883"/>
        <label>3</label>
    </ligand>
</feature>
<feature type="binding site" evidence="1">
    <location>
        <position position="147"/>
    </location>
    <ligand>
        <name>[4Fe-4S] cluster</name>
        <dbReference type="ChEBI" id="CHEBI:49883"/>
        <label>3</label>
    </ligand>
</feature>
<feature type="binding site" evidence="1">
    <location>
        <position position="150"/>
    </location>
    <ligand>
        <name>[4Fe-4S] cluster</name>
        <dbReference type="ChEBI" id="CHEBI:49883"/>
        <label>3</label>
    </ligand>
</feature>
<feature type="binding site" evidence="1">
    <location>
        <position position="153"/>
    </location>
    <ligand>
        <name>[4Fe-4S] cluster</name>
        <dbReference type="ChEBI" id="CHEBI:49883"/>
        <label>3</label>
    </ligand>
</feature>
<feature type="binding site" evidence="1">
    <location>
        <position position="157"/>
    </location>
    <ligand>
        <name>[4Fe-4S] cluster</name>
        <dbReference type="ChEBI" id="CHEBI:49883"/>
        <label>2</label>
    </ligand>
</feature>
<keyword id="KW-0004">4Fe-4S</keyword>
<keyword id="KW-0997">Cell inner membrane</keyword>
<keyword id="KW-1003">Cell membrane</keyword>
<keyword id="KW-0249">Electron transport</keyword>
<keyword id="KW-0408">Iron</keyword>
<keyword id="KW-0411">Iron-sulfur</keyword>
<keyword id="KW-0472">Membrane</keyword>
<keyword id="KW-0479">Metal-binding</keyword>
<keyword id="KW-1185">Reference proteome</keyword>
<keyword id="KW-0677">Repeat</keyword>
<keyword id="KW-1278">Translocase</keyword>
<keyword id="KW-0813">Transport</keyword>
<comment type="function">
    <text evidence="1">Part of a membrane-bound complex that couples electron transfer with translocation of ions across the membrane. Required to maintain the reduced state of SoxR.</text>
</comment>
<comment type="cofactor">
    <cofactor evidence="1">
        <name>[4Fe-4S] cluster</name>
        <dbReference type="ChEBI" id="CHEBI:49883"/>
    </cofactor>
    <text evidence="1">Binds 3 [4Fe-4S] clusters.</text>
</comment>
<comment type="subunit">
    <text evidence="1">The complex is composed of six subunits: RsxA, RsxB, RsxC, RsxD, RsxE and RsxG.</text>
</comment>
<comment type="subcellular location">
    <subcellularLocation>
        <location evidence="1">Cell inner membrane</location>
    </subcellularLocation>
</comment>
<comment type="similarity">
    <text evidence="1">Belongs to the 4Fe4S bacterial-type ferredoxin family. RnfB subfamily.</text>
</comment>
<evidence type="ECO:0000255" key="1">
    <source>
        <dbReference type="HAMAP-Rule" id="MF_00463"/>
    </source>
</evidence>
<sequence length="192" mass="20547">MNAFWIAVAAVSLLGLAFGAILGYASRRFAVEDDPVVEKIDEILPQSQCGQCGYPGCRPYAEAISCNGEKINRCAPGGEAVMLKIAELLNVEPQPLDGEAPELTPARMVAVIDENNCIGCTKCIQACPVDAIVGATRAMHTVMSDLCTGCNLCVDPCPTHCISLQPVAETPDSWKWDLNTIPVRIIPVEHHA</sequence>
<protein>
    <recommendedName>
        <fullName evidence="1">Ion-translocating oxidoreductase complex subunit B</fullName>
        <ecNumber evidence="1">7.-.-.-</ecNumber>
    </recommendedName>
    <alternativeName>
        <fullName evidence="1">Rsx electron transport complex subunit B</fullName>
    </alternativeName>
</protein>